<name>FMT_SHIF8</name>
<protein>
    <recommendedName>
        <fullName evidence="1">Methionyl-tRNA formyltransferase</fullName>
        <ecNumber evidence="1">2.1.2.9</ecNumber>
    </recommendedName>
</protein>
<proteinExistence type="inferred from homology"/>
<feature type="chain" id="PRO_1000020164" description="Methionyl-tRNA formyltransferase">
    <location>
        <begin position="1"/>
        <end position="315"/>
    </location>
</feature>
<feature type="binding site" evidence="1">
    <location>
        <begin position="113"/>
        <end position="116"/>
    </location>
    <ligand>
        <name>(6S)-5,6,7,8-tetrahydrofolate</name>
        <dbReference type="ChEBI" id="CHEBI:57453"/>
    </ligand>
</feature>
<keyword id="KW-0648">Protein biosynthesis</keyword>
<keyword id="KW-0808">Transferase</keyword>
<organism>
    <name type="scientific">Shigella flexneri serotype 5b (strain 8401)</name>
    <dbReference type="NCBI Taxonomy" id="373384"/>
    <lineage>
        <taxon>Bacteria</taxon>
        <taxon>Pseudomonadati</taxon>
        <taxon>Pseudomonadota</taxon>
        <taxon>Gammaproteobacteria</taxon>
        <taxon>Enterobacterales</taxon>
        <taxon>Enterobacteriaceae</taxon>
        <taxon>Shigella</taxon>
    </lineage>
</organism>
<evidence type="ECO:0000255" key="1">
    <source>
        <dbReference type="HAMAP-Rule" id="MF_00182"/>
    </source>
</evidence>
<accession>Q0T015</accession>
<gene>
    <name evidence="1" type="primary">fmt</name>
    <name type="ordered locus">SFV_3307</name>
</gene>
<reference key="1">
    <citation type="journal article" date="2006" name="BMC Genomics">
        <title>Complete genome sequence of Shigella flexneri 5b and comparison with Shigella flexneri 2a.</title>
        <authorList>
            <person name="Nie H."/>
            <person name="Yang F."/>
            <person name="Zhang X."/>
            <person name="Yang J."/>
            <person name="Chen L."/>
            <person name="Wang J."/>
            <person name="Xiong Z."/>
            <person name="Peng J."/>
            <person name="Sun L."/>
            <person name="Dong J."/>
            <person name="Xue Y."/>
            <person name="Xu X."/>
            <person name="Chen S."/>
            <person name="Yao Z."/>
            <person name="Shen Y."/>
            <person name="Jin Q."/>
        </authorList>
    </citation>
    <scope>NUCLEOTIDE SEQUENCE [LARGE SCALE GENOMIC DNA]</scope>
    <source>
        <strain>8401</strain>
    </source>
</reference>
<dbReference type="EC" id="2.1.2.9" evidence="1"/>
<dbReference type="EMBL" id="CP000266">
    <property type="protein sequence ID" value="ABF05350.1"/>
    <property type="molecule type" value="Genomic_DNA"/>
</dbReference>
<dbReference type="RefSeq" id="WP_000004428.1">
    <property type="nucleotide sequence ID" value="NC_008258.1"/>
</dbReference>
<dbReference type="SMR" id="Q0T015"/>
<dbReference type="KEGG" id="sfv:SFV_3307"/>
<dbReference type="HOGENOM" id="CLU_033347_1_2_6"/>
<dbReference type="Proteomes" id="UP000000659">
    <property type="component" value="Chromosome"/>
</dbReference>
<dbReference type="GO" id="GO:0005829">
    <property type="term" value="C:cytosol"/>
    <property type="evidence" value="ECO:0007669"/>
    <property type="project" value="TreeGrafter"/>
</dbReference>
<dbReference type="GO" id="GO:0004479">
    <property type="term" value="F:methionyl-tRNA formyltransferase activity"/>
    <property type="evidence" value="ECO:0007669"/>
    <property type="project" value="UniProtKB-UniRule"/>
</dbReference>
<dbReference type="CDD" id="cd08646">
    <property type="entry name" value="FMT_core_Met-tRNA-FMT_N"/>
    <property type="match status" value="1"/>
</dbReference>
<dbReference type="CDD" id="cd08704">
    <property type="entry name" value="Met_tRNA_FMT_C"/>
    <property type="match status" value="1"/>
</dbReference>
<dbReference type="FunFam" id="3.10.25.10:FF:000001">
    <property type="entry name" value="Methionyl-tRNA formyltransferase"/>
    <property type="match status" value="1"/>
</dbReference>
<dbReference type="FunFam" id="3.40.50.170:FF:000003">
    <property type="entry name" value="Methionyl-tRNA formyltransferase"/>
    <property type="match status" value="1"/>
</dbReference>
<dbReference type="Gene3D" id="3.10.25.10">
    <property type="entry name" value="Formyl transferase, C-terminal domain"/>
    <property type="match status" value="1"/>
</dbReference>
<dbReference type="Gene3D" id="3.40.50.170">
    <property type="entry name" value="Formyl transferase, N-terminal domain"/>
    <property type="match status" value="1"/>
</dbReference>
<dbReference type="HAMAP" id="MF_00182">
    <property type="entry name" value="Formyl_trans"/>
    <property type="match status" value="1"/>
</dbReference>
<dbReference type="InterPro" id="IPR005794">
    <property type="entry name" value="Fmt"/>
</dbReference>
<dbReference type="InterPro" id="IPR005793">
    <property type="entry name" value="Formyl_trans_C"/>
</dbReference>
<dbReference type="InterPro" id="IPR037022">
    <property type="entry name" value="Formyl_trans_C_sf"/>
</dbReference>
<dbReference type="InterPro" id="IPR002376">
    <property type="entry name" value="Formyl_transf_N"/>
</dbReference>
<dbReference type="InterPro" id="IPR036477">
    <property type="entry name" value="Formyl_transf_N_sf"/>
</dbReference>
<dbReference type="InterPro" id="IPR011034">
    <property type="entry name" value="Formyl_transferase-like_C_sf"/>
</dbReference>
<dbReference type="InterPro" id="IPR001555">
    <property type="entry name" value="GART_AS"/>
</dbReference>
<dbReference type="InterPro" id="IPR044135">
    <property type="entry name" value="Met-tRNA-FMT_C"/>
</dbReference>
<dbReference type="InterPro" id="IPR041711">
    <property type="entry name" value="Met-tRNA-FMT_N"/>
</dbReference>
<dbReference type="NCBIfam" id="TIGR00460">
    <property type="entry name" value="fmt"/>
    <property type="match status" value="1"/>
</dbReference>
<dbReference type="PANTHER" id="PTHR11138">
    <property type="entry name" value="METHIONYL-TRNA FORMYLTRANSFERASE"/>
    <property type="match status" value="1"/>
</dbReference>
<dbReference type="PANTHER" id="PTHR11138:SF5">
    <property type="entry name" value="METHIONYL-TRNA FORMYLTRANSFERASE, MITOCHONDRIAL"/>
    <property type="match status" value="1"/>
</dbReference>
<dbReference type="Pfam" id="PF02911">
    <property type="entry name" value="Formyl_trans_C"/>
    <property type="match status" value="1"/>
</dbReference>
<dbReference type="Pfam" id="PF00551">
    <property type="entry name" value="Formyl_trans_N"/>
    <property type="match status" value="1"/>
</dbReference>
<dbReference type="SUPFAM" id="SSF50486">
    <property type="entry name" value="FMT C-terminal domain-like"/>
    <property type="match status" value="1"/>
</dbReference>
<dbReference type="SUPFAM" id="SSF53328">
    <property type="entry name" value="Formyltransferase"/>
    <property type="match status" value="1"/>
</dbReference>
<dbReference type="PROSITE" id="PS00373">
    <property type="entry name" value="GART"/>
    <property type="match status" value="1"/>
</dbReference>
<comment type="function">
    <text evidence="1">Attaches a formyl group to the free amino group of methionyl-tRNA(fMet). The formyl group appears to play a dual role in the initiator identity of N-formylmethionyl-tRNA by promoting its recognition by IF2 and preventing the misappropriation of this tRNA by the elongation apparatus.</text>
</comment>
<comment type="catalytic activity">
    <reaction evidence="1">
        <text>L-methionyl-tRNA(fMet) + (6R)-10-formyltetrahydrofolate = N-formyl-L-methionyl-tRNA(fMet) + (6S)-5,6,7,8-tetrahydrofolate + H(+)</text>
        <dbReference type="Rhea" id="RHEA:24380"/>
        <dbReference type="Rhea" id="RHEA-COMP:9952"/>
        <dbReference type="Rhea" id="RHEA-COMP:9953"/>
        <dbReference type="ChEBI" id="CHEBI:15378"/>
        <dbReference type="ChEBI" id="CHEBI:57453"/>
        <dbReference type="ChEBI" id="CHEBI:78530"/>
        <dbReference type="ChEBI" id="CHEBI:78844"/>
        <dbReference type="ChEBI" id="CHEBI:195366"/>
        <dbReference type="EC" id="2.1.2.9"/>
    </reaction>
</comment>
<comment type="similarity">
    <text evidence="1">Belongs to the Fmt family.</text>
</comment>
<sequence>MSESLRIIFAGTPDFAARHLDALLSSGHNVVGVFTQPDRPAGRGKKLMPSPIKVLAEEEGLPVFQPVSLRPQENQQLVADLQADVMVVVAYGLILPKAVLEMPRLGCINIHGSLLPRWRGAAPIQRSLWAGDAETGVTIMQMDVGLDTGDMLYKLSCPITAEDTSGTLYDKLAELGPQGLITTLKQLADGTAKPEVQDETLVTYAEKLSKEEARIDWSLSAAQLERCIRAFNPWPMSWLEIEGQPVKVWKASVIDTATNAAPGTILEANKQGIQVATGDGILNLLSLQPAGKKAMSAQDLLNSRREWFVPGNRLV</sequence>